<organism>
    <name type="scientific">Mesorhizobium japonicum (strain LMG 29417 / CECT 9101 / MAFF 303099)</name>
    <name type="common">Mesorhizobium loti (strain MAFF 303099)</name>
    <dbReference type="NCBI Taxonomy" id="266835"/>
    <lineage>
        <taxon>Bacteria</taxon>
        <taxon>Pseudomonadati</taxon>
        <taxon>Pseudomonadota</taxon>
        <taxon>Alphaproteobacteria</taxon>
        <taxon>Hyphomicrobiales</taxon>
        <taxon>Phyllobacteriaceae</taxon>
        <taxon>Mesorhizobium</taxon>
    </lineage>
</organism>
<sequence length="306" mass="32359">MSISAAQVKELRDLTGAGMMDCKAALNETNGNMEEAVDWLRKKGISKADKKAGRTAAEGLIGVDAGVREAAVVEVNSETDFVARNAAFQEIVANVAKVALAYGTTEAVAAAKYPGSDKSVTDTIKDAVGTIGENLGFRRSAKLTVPHGAVATYVHNAVADGLGKLGVLVAIETTGNEHAANAFGRQVAMHVAATNPMALTAEQIDPAAVEREKAIFSDQARQSGKPEAIIEKMVEGRMRKFYEEVVLLKQAFVLNPDITVEKALKDAEKEIGAPAKITAYLRFALGEGIEKEETDFAAEVAAAVKK</sequence>
<keyword id="KW-0963">Cytoplasm</keyword>
<keyword id="KW-0251">Elongation factor</keyword>
<keyword id="KW-0648">Protein biosynthesis</keyword>
<proteinExistence type="inferred from homology"/>
<protein>
    <recommendedName>
        <fullName evidence="1">Elongation factor Ts</fullName>
        <shortName evidence="1">EF-Ts</shortName>
    </recommendedName>
</protein>
<accession>Q98MB3</accession>
<comment type="function">
    <text evidence="1">Associates with the EF-Tu.GDP complex and induces the exchange of GDP to GTP. It remains bound to the aminoacyl-tRNA.EF-Tu.GTP complex up to the GTP hydrolysis stage on the ribosome.</text>
</comment>
<comment type="subcellular location">
    <subcellularLocation>
        <location evidence="1">Cytoplasm</location>
    </subcellularLocation>
</comment>
<comment type="similarity">
    <text evidence="1">Belongs to the EF-Ts family.</text>
</comment>
<feature type="chain" id="PRO_0000161180" description="Elongation factor Ts">
    <location>
        <begin position="1"/>
        <end position="306"/>
    </location>
</feature>
<feature type="region of interest" description="Involved in Mg(2+) ion dislocation from EF-Tu" evidence="1">
    <location>
        <begin position="79"/>
        <end position="82"/>
    </location>
</feature>
<dbReference type="EMBL" id="BA000012">
    <property type="protein sequence ID" value="BAB48200.1"/>
    <property type="molecule type" value="Genomic_DNA"/>
</dbReference>
<dbReference type="RefSeq" id="WP_010909555.1">
    <property type="nucleotide sequence ID" value="NC_002678.2"/>
</dbReference>
<dbReference type="SMR" id="Q98MB3"/>
<dbReference type="GeneID" id="66683980"/>
<dbReference type="KEGG" id="mlo:mll0650"/>
<dbReference type="eggNOG" id="COG0264">
    <property type="taxonomic scope" value="Bacteria"/>
</dbReference>
<dbReference type="HOGENOM" id="CLU_047155_2_0_5"/>
<dbReference type="Proteomes" id="UP000000552">
    <property type="component" value="Chromosome"/>
</dbReference>
<dbReference type="GO" id="GO:0005737">
    <property type="term" value="C:cytoplasm"/>
    <property type="evidence" value="ECO:0007669"/>
    <property type="project" value="UniProtKB-SubCell"/>
</dbReference>
<dbReference type="GO" id="GO:0003746">
    <property type="term" value="F:translation elongation factor activity"/>
    <property type="evidence" value="ECO:0007669"/>
    <property type="project" value="UniProtKB-UniRule"/>
</dbReference>
<dbReference type="CDD" id="cd14275">
    <property type="entry name" value="UBA_EF-Ts"/>
    <property type="match status" value="1"/>
</dbReference>
<dbReference type="FunFam" id="1.10.286.20:FF:000001">
    <property type="entry name" value="Elongation factor Ts"/>
    <property type="match status" value="1"/>
</dbReference>
<dbReference type="FunFam" id="1.10.8.10:FF:000001">
    <property type="entry name" value="Elongation factor Ts"/>
    <property type="match status" value="1"/>
</dbReference>
<dbReference type="Gene3D" id="1.10.286.20">
    <property type="match status" value="1"/>
</dbReference>
<dbReference type="Gene3D" id="1.10.8.10">
    <property type="entry name" value="DNA helicase RuvA subunit, C-terminal domain"/>
    <property type="match status" value="1"/>
</dbReference>
<dbReference type="Gene3D" id="3.30.479.20">
    <property type="entry name" value="Elongation factor Ts, dimerisation domain"/>
    <property type="match status" value="2"/>
</dbReference>
<dbReference type="HAMAP" id="MF_00050">
    <property type="entry name" value="EF_Ts"/>
    <property type="match status" value="1"/>
</dbReference>
<dbReference type="InterPro" id="IPR036402">
    <property type="entry name" value="EF-Ts_dimer_sf"/>
</dbReference>
<dbReference type="InterPro" id="IPR001816">
    <property type="entry name" value="Transl_elong_EFTs/EF1B"/>
</dbReference>
<dbReference type="InterPro" id="IPR014039">
    <property type="entry name" value="Transl_elong_EFTs/EF1B_dimer"/>
</dbReference>
<dbReference type="InterPro" id="IPR018101">
    <property type="entry name" value="Transl_elong_Ts_CS"/>
</dbReference>
<dbReference type="InterPro" id="IPR009060">
    <property type="entry name" value="UBA-like_sf"/>
</dbReference>
<dbReference type="NCBIfam" id="TIGR00116">
    <property type="entry name" value="tsf"/>
    <property type="match status" value="1"/>
</dbReference>
<dbReference type="PANTHER" id="PTHR11741">
    <property type="entry name" value="ELONGATION FACTOR TS"/>
    <property type="match status" value="1"/>
</dbReference>
<dbReference type="PANTHER" id="PTHR11741:SF0">
    <property type="entry name" value="ELONGATION FACTOR TS, MITOCHONDRIAL"/>
    <property type="match status" value="1"/>
</dbReference>
<dbReference type="Pfam" id="PF00889">
    <property type="entry name" value="EF_TS"/>
    <property type="match status" value="1"/>
</dbReference>
<dbReference type="SUPFAM" id="SSF54713">
    <property type="entry name" value="Elongation factor Ts (EF-Ts), dimerisation domain"/>
    <property type="match status" value="2"/>
</dbReference>
<dbReference type="SUPFAM" id="SSF46934">
    <property type="entry name" value="UBA-like"/>
    <property type="match status" value="1"/>
</dbReference>
<dbReference type="PROSITE" id="PS01127">
    <property type="entry name" value="EF_TS_2"/>
    <property type="match status" value="1"/>
</dbReference>
<name>EFTS_RHILO</name>
<reference key="1">
    <citation type="journal article" date="2000" name="DNA Res.">
        <title>Complete genome structure of the nitrogen-fixing symbiotic bacterium Mesorhizobium loti.</title>
        <authorList>
            <person name="Kaneko T."/>
            <person name="Nakamura Y."/>
            <person name="Sato S."/>
            <person name="Asamizu E."/>
            <person name="Kato T."/>
            <person name="Sasamoto S."/>
            <person name="Watanabe A."/>
            <person name="Idesawa K."/>
            <person name="Ishikawa A."/>
            <person name="Kawashima K."/>
            <person name="Kimura T."/>
            <person name="Kishida Y."/>
            <person name="Kiyokawa C."/>
            <person name="Kohara M."/>
            <person name="Matsumoto M."/>
            <person name="Matsuno A."/>
            <person name="Mochizuki Y."/>
            <person name="Nakayama S."/>
            <person name="Nakazaki N."/>
            <person name="Shimpo S."/>
            <person name="Sugimoto M."/>
            <person name="Takeuchi C."/>
            <person name="Yamada M."/>
            <person name="Tabata S."/>
        </authorList>
    </citation>
    <scope>NUCLEOTIDE SEQUENCE [LARGE SCALE GENOMIC DNA]</scope>
    <source>
        <strain>LMG 29417 / CECT 9101 / MAFF 303099</strain>
    </source>
</reference>
<gene>
    <name evidence="1" type="primary">tsf</name>
    <name type="ordered locus">mll0650</name>
</gene>
<evidence type="ECO:0000255" key="1">
    <source>
        <dbReference type="HAMAP-Rule" id="MF_00050"/>
    </source>
</evidence>